<accession>Q5R419</accession>
<accession>Q5R4G3</accession>
<accession>Q5RCN8</accession>
<comment type="function">
    <text evidence="1">Enhances the incorporation of serine into phosphatidylserine and sphingolipids.</text>
</comment>
<comment type="subunit">
    <text evidence="1">Interacts with SPTLC1.</text>
</comment>
<comment type="subcellular location">
    <subcellularLocation>
        <location evidence="1">Endoplasmic reticulum membrane</location>
        <topology evidence="1">Multi-pass membrane protein</topology>
    </subcellularLocation>
</comment>
<comment type="similarity">
    <text evidence="4">Belongs to the TDE1 family.</text>
</comment>
<keyword id="KW-0256">Endoplasmic reticulum</keyword>
<keyword id="KW-0444">Lipid biosynthesis</keyword>
<keyword id="KW-0443">Lipid metabolism</keyword>
<keyword id="KW-0449">Lipoprotein</keyword>
<keyword id="KW-0472">Membrane</keyword>
<keyword id="KW-0519">Myristate</keyword>
<keyword id="KW-0594">Phospholipid biosynthesis</keyword>
<keyword id="KW-1208">Phospholipid metabolism</keyword>
<keyword id="KW-0597">Phosphoprotein</keyword>
<keyword id="KW-1185">Reference proteome</keyword>
<keyword id="KW-0812">Transmembrane</keyword>
<keyword id="KW-1133">Transmembrane helix</keyword>
<name>SERC1_PONAB</name>
<evidence type="ECO:0000250" key="1">
    <source>
        <dbReference type="UniProtKB" id="Q7TNK0"/>
    </source>
</evidence>
<evidence type="ECO:0000250" key="2">
    <source>
        <dbReference type="UniProtKB" id="Q9NRX5"/>
    </source>
</evidence>
<evidence type="ECO:0000255" key="3"/>
<evidence type="ECO:0000305" key="4"/>
<feature type="initiator methionine" description="Removed" evidence="2">
    <location>
        <position position="1"/>
    </location>
</feature>
<feature type="chain" id="PRO_0000289995" description="Serine incorporator 1">
    <location>
        <begin position="2"/>
        <end position="453"/>
    </location>
</feature>
<feature type="topological domain" description="Cytoplasmic" evidence="3">
    <location>
        <begin position="2"/>
        <end position="39"/>
    </location>
</feature>
<feature type="transmembrane region" description="Helical" evidence="3">
    <location>
        <begin position="40"/>
        <end position="60"/>
    </location>
</feature>
<feature type="topological domain" description="Lumenal" evidence="3">
    <location>
        <begin position="61"/>
        <end position="88"/>
    </location>
</feature>
<feature type="transmembrane region" description="Helical" evidence="3">
    <location>
        <begin position="89"/>
        <end position="109"/>
    </location>
</feature>
<feature type="topological domain" description="Cytoplasmic" evidence="3">
    <location>
        <begin position="110"/>
        <end position="123"/>
    </location>
</feature>
<feature type="transmembrane region" description="Helical" evidence="3">
    <location>
        <begin position="124"/>
        <end position="144"/>
    </location>
</feature>
<feature type="topological domain" description="Lumenal" evidence="3">
    <location>
        <begin position="145"/>
        <end position="151"/>
    </location>
</feature>
<feature type="transmembrane region" description="Helical" evidence="3">
    <location>
        <begin position="152"/>
        <end position="172"/>
    </location>
</feature>
<feature type="topological domain" description="Cytoplasmic" evidence="3">
    <location>
        <begin position="173"/>
        <end position="197"/>
    </location>
</feature>
<feature type="transmembrane region" description="Helical" evidence="3">
    <location>
        <begin position="198"/>
        <end position="218"/>
    </location>
</feature>
<feature type="topological domain" description="Lumenal" evidence="3">
    <location>
        <begin position="219"/>
        <end position="231"/>
    </location>
</feature>
<feature type="transmembrane region" description="Helical" evidence="3">
    <location>
        <begin position="232"/>
        <end position="252"/>
    </location>
</feature>
<feature type="topological domain" description="Cytoplasmic" evidence="3">
    <location>
        <begin position="253"/>
        <end position="259"/>
    </location>
</feature>
<feature type="transmembrane region" description="Helical" evidence="3">
    <location>
        <begin position="260"/>
        <end position="280"/>
    </location>
</feature>
<feature type="topological domain" description="Lumenal" evidence="3">
    <location>
        <begin position="281"/>
        <end position="309"/>
    </location>
</feature>
<feature type="transmembrane region" description="Helical" evidence="3">
    <location>
        <begin position="310"/>
        <end position="330"/>
    </location>
</feature>
<feature type="topological domain" description="Cytoplasmic" evidence="3">
    <location>
        <begin position="331"/>
        <end position="387"/>
    </location>
</feature>
<feature type="transmembrane region" description="Helical" evidence="3">
    <location>
        <begin position="388"/>
        <end position="408"/>
    </location>
</feature>
<feature type="topological domain" description="Lumenal" evidence="3">
    <location>
        <begin position="409"/>
        <end position="426"/>
    </location>
</feature>
<feature type="transmembrane region" description="Helical" evidence="3">
    <location>
        <begin position="427"/>
        <end position="447"/>
    </location>
</feature>
<feature type="topological domain" description="Cytoplasmic" evidence="3">
    <location>
        <begin position="448"/>
        <end position="453"/>
    </location>
</feature>
<feature type="modified residue" description="Phosphoserine" evidence="2">
    <location>
        <position position="351"/>
    </location>
</feature>
<feature type="modified residue" description="Phosphothreonine" evidence="2">
    <location>
        <position position="352"/>
    </location>
</feature>
<feature type="modified residue" description="Phosphoserine" evidence="2">
    <location>
        <position position="361"/>
    </location>
</feature>
<feature type="modified residue" description="Phosphoserine" evidence="2">
    <location>
        <position position="364"/>
    </location>
</feature>
<feature type="lipid moiety-binding region" description="N-myristoyl glycine" evidence="2">
    <location>
        <position position="2"/>
    </location>
</feature>
<feature type="sequence conflict" description="In Ref. 1; CAH93353." evidence="4" ref="1">
    <original>T</original>
    <variation>A</variation>
    <location>
        <position position="36"/>
    </location>
</feature>
<feature type="sequence conflict" description="In Ref. 1; CAH90469/CAH93353." evidence="4" ref="1">
    <original>E</original>
    <variation>K</variation>
    <location>
        <position position="75"/>
    </location>
</feature>
<feature type="sequence conflict" description="In Ref. 1; CAH90469." evidence="4" ref="1">
    <original>I</original>
    <variation>T</variation>
    <location>
        <position position="319"/>
    </location>
</feature>
<feature type="sequence conflict" description="In Ref. 1; CAH90469." evidence="4" ref="1">
    <original>H</original>
    <variation>R</variation>
    <location>
        <position position="390"/>
    </location>
</feature>
<feature type="sequence conflict" description="In Ref. 1; CAH90469." evidence="4" ref="1">
    <original>W</original>
    <variation>R</variation>
    <location>
        <position position="439"/>
    </location>
</feature>
<reference key="1">
    <citation type="submission" date="2004-11" db="EMBL/GenBank/DDBJ databases">
        <authorList>
            <consortium name="The German cDNA consortium"/>
        </authorList>
    </citation>
    <scope>NUCLEOTIDE SEQUENCE [LARGE SCALE MRNA]</scope>
    <source>
        <tissue>Brain cortex</tissue>
    </source>
</reference>
<protein>
    <recommendedName>
        <fullName>Serine incorporator 1</fullName>
    </recommendedName>
    <alternativeName>
        <fullName>Tumor differentially expressed protein 2</fullName>
    </alternativeName>
</protein>
<sequence>MGSVLGLCSMASWIPCLCGSAPCLLCRCCPSGNNSTVTRLIYALFLLVGVCVACVMLIPGMEEQLNKIPGFCENEKGVVPCNILVGYKAVYRLCFGLAMFYLLLSLLMIKVKSSSDPRAAVHNGFWFFKFAAAIAIIIGAFFIPEGTFTTVWFYVGMAGAFCFILIQLVLLIDFAHSWNESWVEKMEEGNSRCWYAALLSATALNYLLSLVAIVLFFVYYTHPASCSENKAFISVNMLLCIGASVMSILPKIQESQPRSGLLQSSVITVYTMYLTWSAMTNEPETNCNPSLLSIIGYNTTSTVPKEGQSVQWWHAQGIIGLILFLLCVFYSSIRTSNNSQVNKLTLTSDESTLIEDGGARSDGSLEDGDDVHRAVDNERDGVTYSYSFFHFMLFLASLYIMMTLTNWYRYEPSREMKSQWTAVWVKISSSWIGIVLYVWTLVAPLVLTNRDFD</sequence>
<proteinExistence type="evidence at transcript level"/>
<gene>
    <name type="primary">SERINC1</name>
    <name type="synonym">TDE2</name>
</gene>
<dbReference type="EMBL" id="CR858232">
    <property type="protein sequence ID" value="CAH90469.1"/>
    <property type="molecule type" value="mRNA"/>
</dbReference>
<dbReference type="EMBL" id="CR859032">
    <property type="protein sequence ID" value="CAH91227.1"/>
    <property type="molecule type" value="mRNA"/>
</dbReference>
<dbReference type="EMBL" id="CR861286">
    <property type="protein sequence ID" value="CAH93353.1"/>
    <property type="molecule type" value="mRNA"/>
</dbReference>
<dbReference type="EMBL" id="CR861441">
    <property type="protein sequence ID" value="CAH93497.1"/>
    <property type="molecule type" value="mRNA"/>
</dbReference>
<dbReference type="RefSeq" id="NP_001125724.1">
    <property type="nucleotide sequence ID" value="NM_001132252.2"/>
</dbReference>
<dbReference type="SMR" id="Q5R419"/>
<dbReference type="FunCoup" id="Q5R419">
    <property type="interactions" value="2665"/>
</dbReference>
<dbReference type="STRING" id="9601.ENSPPYP00000019007"/>
<dbReference type="Ensembl" id="ENSPPYT00000046612.1">
    <property type="protein sequence ID" value="ENSPPYP00000039127.1"/>
    <property type="gene ID" value="ENSPPYG00000016977.3"/>
</dbReference>
<dbReference type="GeneID" id="100172649"/>
<dbReference type="KEGG" id="pon:100172649"/>
<dbReference type="CTD" id="57515"/>
<dbReference type="eggNOG" id="KOG2592">
    <property type="taxonomic scope" value="Eukaryota"/>
</dbReference>
<dbReference type="GeneTree" id="ENSGT01030000234623"/>
<dbReference type="InParanoid" id="Q5R419"/>
<dbReference type="OMA" id="DKHCNPL"/>
<dbReference type="OrthoDB" id="5963193at2759"/>
<dbReference type="Proteomes" id="UP000001595">
    <property type="component" value="Chromosome 6"/>
</dbReference>
<dbReference type="GO" id="GO:0005789">
    <property type="term" value="C:endoplasmic reticulum membrane"/>
    <property type="evidence" value="ECO:0007669"/>
    <property type="project" value="UniProtKB-SubCell"/>
</dbReference>
<dbReference type="GO" id="GO:0008654">
    <property type="term" value="P:phospholipid biosynthetic process"/>
    <property type="evidence" value="ECO:0007669"/>
    <property type="project" value="UniProtKB-KW"/>
</dbReference>
<dbReference type="InterPro" id="IPR005016">
    <property type="entry name" value="TDE1/TMS"/>
</dbReference>
<dbReference type="PANTHER" id="PTHR10383">
    <property type="entry name" value="SERINE INCORPORATOR"/>
    <property type="match status" value="1"/>
</dbReference>
<dbReference type="PANTHER" id="PTHR10383:SF15">
    <property type="entry name" value="SERINE INCORPORATOR 1"/>
    <property type="match status" value="1"/>
</dbReference>
<dbReference type="Pfam" id="PF03348">
    <property type="entry name" value="Serinc"/>
    <property type="match status" value="1"/>
</dbReference>
<organism>
    <name type="scientific">Pongo abelii</name>
    <name type="common">Sumatran orangutan</name>
    <name type="synonym">Pongo pygmaeus abelii</name>
    <dbReference type="NCBI Taxonomy" id="9601"/>
    <lineage>
        <taxon>Eukaryota</taxon>
        <taxon>Metazoa</taxon>
        <taxon>Chordata</taxon>
        <taxon>Craniata</taxon>
        <taxon>Vertebrata</taxon>
        <taxon>Euteleostomi</taxon>
        <taxon>Mammalia</taxon>
        <taxon>Eutheria</taxon>
        <taxon>Euarchontoglires</taxon>
        <taxon>Primates</taxon>
        <taxon>Haplorrhini</taxon>
        <taxon>Catarrhini</taxon>
        <taxon>Hominidae</taxon>
        <taxon>Pongo</taxon>
    </lineage>
</organism>